<comment type="function">
    <text evidence="1">In epithelial cells, the heterodimer gE/gI is required for the cell-to-cell spread of the virus, by sorting nascent virions to cell junctions. Once the virus reaches the cell junctions, virus particles can spread to adjacent cells extremely rapidly through interactions with cellular receptors that accumulate at these junctions. Implicated in basolateral spread in polarized cells. In neuronal cells, gE/gI is essential for the anterograde spread of the infection throughout the host nervous system. Together with US9, the heterodimer gE/gI is involved in the sorting and transport of viral structural components toward axon tips (By similarity).</text>
</comment>
<comment type="subunit">
    <text evidence="1">Interacts with gI.</text>
</comment>
<comment type="subcellular location">
    <subcellularLocation>
        <location evidence="1">Virion membrane</location>
        <topology evidence="1">Single-pass type I membrane protein</topology>
    </subcellularLocation>
    <subcellularLocation>
        <location evidence="1">Host cell membrane</location>
        <topology evidence="1">Single-pass type I membrane protein</topology>
    </subcellularLocation>
    <subcellularLocation>
        <location evidence="1">Host cell junction</location>
    </subcellularLocation>
    <subcellularLocation>
        <location evidence="1">Host Golgi apparatus membrane</location>
        <topology evidence="1">Single-pass membrane protein</topology>
    </subcellularLocation>
    <subcellularLocation>
        <location evidence="1">Host endosome membrane</location>
        <topology evidence="1">Single-pass membrane protein</topology>
    </subcellularLocation>
    <text evidence="1">During virion morphogenesis, this protein probably accumulates in the endosomes and trans-Golgi where secondary envelopment occurs. It is probably transported to the cell surface from where it is endocytosed and directed to the trans-Golgi network (TGN), maybe through an interaction with PACS-1 sorting protein. The heterodimer gE/gI then redistributes to cell junctions to promote cell-cell spread later in the infection (By similarity).</text>
</comment>
<comment type="PTM">
    <text evidence="1">Phosphorylated within the acidic cluster. Phosphorylation determines whether endocytosed viral gE traffics to the trans-Golgi network or recycles to the cell membrane (By similarity).</text>
</comment>
<comment type="similarity">
    <text evidence="3">Belongs to the alphaherpesvirinae glycoprotein E family.</text>
</comment>
<gene>
    <name type="primary">gE</name>
    <name type="ORF">ORF68</name>
</gene>
<proteinExistence type="inferred from homology"/>
<keyword id="KW-1015">Disulfide bond</keyword>
<keyword id="KW-0325">Glycoprotein</keyword>
<keyword id="KW-1031">Host cell junction</keyword>
<keyword id="KW-1032">Host cell membrane</keyword>
<keyword id="KW-1039">Host endosome</keyword>
<keyword id="KW-1040">Host Golgi apparatus</keyword>
<keyword id="KW-1043">Host membrane</keyword>
<keyword id="KW-0472">Membrane</keyword>
<keyword id="KW-0732">Signal</keyword>
<keyword id="KW-0812">Transmembrane</keyword>
<keyword id="KW-1133">Transmembrane helix</keyword>
<keyword id="KW-0261">Viral envelope protein</keyword>
<keyword id="KW-0946">Virion</keyword>
<evidence type="ECO:0000250" key="1"/>
<evidence type="ECO:0000255" key="2"/>
<evidence type="ECO:0000305" key="3"/>
<protein>
    <recommendedName>
        <fullName>Envelope glycoprotein E</fullName>
    </recommendedName>
    <alternativeName>
        <fullName>Membrane glycoprotein 2</fullName>
        <shortName>gE</shortName>
    </alternativeName>
</protein>
<feature type="signal peptide" evidence="2">
    <location>
        <begin position="1"/>
        <end position="24"/>
    </location>
</feature>
<feature type="chain" id="PRO_0000038232" description="Envelope glycoprotein E">
    <location>
        <begin position="25"/>
        <end position="604"/>
    </location>
</feature>
<feature type="topological domain" description="Virion surface" evidence="2">
    <location>
        <begin position="25"/>
        <end position="526"/>
    </location>
</feature>
<feature type="transmembrane region" description="Helical" evidence="2">
    <location>
        <begin position="527"/>
        <end position="544"/>
    </location>
</feature>
<feature type="topological domain" description="Intravirion" evidence="2">
    <location>
        <begin position="545"/>
        <end position="604"/>
    </location>
</feature>
<feature type="region of interest" description="Interaction with gI" evidence="1">
    <location>
        <begin position="192"/>
        <end position="219"/>
    </location>
</feature>
<feature type="region of interest" description="Acidic" evidence="1">
    <location>
        <begin position="574"/>
        <end position="586"/>
    </location>
</feature>
<feature type="short sequence motif" description="Internalization motif" evidence="2">
    <location>
        <begin position="568"/>
        <end position="571"/>
    </location>
</feature>
<feature type="glycosylation site" description="N-linked (GlcNAc...) asparagine; by host" evidence="2">
    <location>
        <position position="117"/>
    </location>
</feature>
<feature type="glycosylation site" description="N-linked (GlcNAc...) asparagine; by host" evidence="2">
    <location>
        <position position="249"/>
    </location>
</feature>
<feature type="glycosylation site" description="N-linked (GlcNAc...) asparagine; by host" evidence="2">
    <location>
        <position position="303"/>
    </location>
</feature>
<feature type="glycosylation site" description="N-linked (GlcNAc...) asparagine; by host" evidence="2">
    <location>
        <position position="419"/>
    </location>
</feature>
<feature type="glycosylation site" description="N-linked (GlcNAc...) asparagine; by host" evidence="2">
    <location>
        <position position="505"/>
    </location>
</feature>
<feature type="disulfide bond" evidence="1">
    <location>
        <begin position="370"/>
        <end position="396"/>
    </location>
</feature>
<feature type="disulfide bond" evidence="1">
    <location>
        <begin position="379"/>
        <end position="388"/>
    </location>
</feature>
<feature type="disulfide bond" evidence="1">
    <location>
        <begin position="415"/>
        <end position="424"/>
    </location>
</feature>
<dbReference type="EMBL" id="L07067">
    <property type="protein sequence ID" value="AAA47889.1"/>
    <property type="molecule type" value="Genomic_DNA"/>
</dbReference>
<dbReference type="PIR" id="D46113">
    <property type="entry name" value="D46113"/>
</dbReference>
<dbReference type="RefSeq" id="NP_077482.1">
    <property type="nucleotide sequence ID" value="NC_002686.2"/>
</dbReference>
<dbReference type="SMR" id="Q04548"/>
<dbReference type="GlyCosmos" id="Q04548">
    <property type="glycosylation" value="5 sites, No reported glycans"/>
</dbReference>
<dbReference type="GeneID" id="920503"/>
<dbReference type="KEGG" id="vg:920503"/>
<dbReference type="GO" id="GO:0044175">
    <property type="term" value="C:host cell endosome membrane"/>
    <property type="evidence" value="ECO:0007669"/>
    <property type="project" value="UniProtKB-SubCell"/>
</dbReference>
<dbReference type="GO" id="GO:0044178">
    <property type="term" value="C:host cell Golgi membrane"/>
    <property type="evidence" value="ECO:0007669"/>
    <property type="project" value="UniProtKB-SubCell"/>
</dbReference>
<dbReference type="GO" id="GO:0044156">
    <property type="term" value="C:host cell junction"/>
    <property type="evidence" value="ECO:0007669"/>
    <property type="project" value="UniProtKB-SubCell"/>
</dbReference>
<dbReference type="GO" id="GO:0016020">
    <property type="term" value="C:membrane"/>
    <property type="evidence" value="ECO:0007669"/>
    <property type="project" value="UniProtKB-KW"/>
</dbReference>
<dbReference type="GO" id="GO:0019031">
    <property type="term" value="C:viral envelope"/>
    <property type="evidence" value="ECO:0007669"/>
    <property type="project" value="UniProtKB-KW"/>
</dbReference>
<dbReference type="GO" id="GO:0055036">
    <property type="term" value="C:virion membrane"/>
    <property type="evidence" value="ECO:0007669"/>
    <property type="project" value="UniProtKB-SubCell"/>
</dbReference>
<dbReference type="Gene3D" id="2.60.40.10">
    <property type="entry name" value="Immunoglobulins"/>
    <property type="match status" value="1"/>
</dbReference>
<dbReference type="InterPro" id="IPR046463">
    <property type="entry name" value="Herpes_gE_N"/>
</dbReference>
<dbReference type="InterPro" id="IPR003404">
    <property type="entry name" value="Herpes_glycopE_Fc"/>
</dbReference>
<dbReference type="InterPro" id="IPR036179">
    <property type="entry name" value="Ig-like_dom_sf"/>
</dbReference>
<dbReference type="InterPro" id="IPR013783">
    <property type="entry name" value="Ig-like_fold"/>
</dbReference>
<dbReference type="Pfam" id="PF02480">
    <property type="entry name" value="Herpes_gE"/>
    <property type="match status" value="1"/>
</dbReference>
<dbReference type="Pfam" id="PF20418">
    <property type="entry name" value="Herpes_gE_N"/>
    <property type="match status" value="1"/>
</dbReference>
<dbReference type="SUPFAM" id="SSF48726">
    <property type="entry name" value="Immunoglobulin"/>
    <property type="match status" value="1"/>
</dbReference>
<name>GE_CHV9D</name>
<organism>
    <name type="scientific">Cercopithecine herpesvirus 9 (strain DHV)</name>
    <name type="common">CeHV-9</name>
    <name type="synonym">Simian varicella virus</name>
    <dbReference type="NCBI Taxonomy" id="36348"/>
    <lineage>
        <taxon>Viruses</taxon>
        <taxon>Duplodnaviria</taxon>
        <taxon>Heunggongvirae</taxon>
        <taxon>Peploviricota</taxon>
        <taxon>Herviviricetes</taxon>
        <taxon>Herpesvirales</taxon>
        <taxon>Orthoherpesviridae</taxon>
        <taxon>Alphaherpesvirinae</taxon>
        <taxon>Varicellovirus</taxon>
        <taxon>Varicellovirus cercopithecinealpha9</taxon>
    </lineage>
</organism>
<accession>Q04548</accession>
<sequence length="604" mass="67583">MRMTVVKHVMLTLICGTLSWGVQINTLAYASAIKSEDGFDMDEDGVYGDDIQDYINAAYTHERPFIQDKSKHKMETYTQSLLHTDLETDSQISRERGNYINAQELGDGNNEHVDLVNRTMTKNVLMKHGHRNFMDASILYKSVHGITHLHAHQRPTEVSVAENQQLLLKVHIPQENEHTYTERWSFLPAAPCKLTPPSIQQVCIKHGACIHDVVVDVDCIAESMEHTLVEIGYVVHASKAVHPTWTVVNITEDFANYGFDTPDVKPGVLKFEHMNAHHAGVYIWNLQGTHGENMYVTFLVKLNNSIENHIDLPAVTPKPKGAEFHTWHYHSHVFSVGETFSLPMHLQYKIHDTPFDLLLEWLYVPINPTCQPMRLYSACVYHETVPSCLSPENPECTFASPHIARRVANTVYQNCEHVNYTADCLAVSHVEPGSGLEIQNGGSALLFVNAAESMSGLYVFIIHFNGHVETVAYTVVSTIENFVNAIEEHGFPPEIHNVPSPSSPNVTANNDVISETNTFPFKTYAGITGGFAVLALVCLALALVCTKRKFGHRSYWSDKAAYGQSTYYAGVPVDDFEDDTEVEVDEGAECGGSGYTVYIDKRTR</sequence>
<organismHost>
    <name type="scientific">Chlorocebus aethiops</name>
    <name type="common">Green monkey</name>
    <name type="synonym">Cercopithecus aethiops</name>
    <dbReference type="NCBI Taxonomy" id="9534"/>
</organismHost>
<reference key="1">
    <citation type="journal article" date="1993" name="Virology">
        <title>DNA sequence and genetic organization of the unique short (US) region of the simian varicella virus genome.</title>
        <authorList>
            <person name="Fletcher T.M. III"/>
            <person name="Gray W.L."/>
        </authorList>
    </citation>
    <scope>NUCLEOTIDE SEQUENCE [GENOMIC DNA]</scope>
</reference>